<keyword id="KW-0687">Ribonucleoprotein</keyword>
<keyword id="KW-0689">Ribosomal protein</keyword>
<keyword id="KW-0694">RNA-binding</keyword>
<keyword id="KW-0699">rRNA-binding</keyword>
<evidence type="ECO:0000255" key="1">
    <source>
        <dbReference type="HAMAP-Rule" id="MF_00537"/>
    </source>
</evidence>
<evidence type="ECO:0000305" key="2"/>
<name>RS14_SERP5</name>
<feature type="chain" id="PRO_1000128568" description="Small ribosomal subunit protein uS14">
    <location>
        <begin position="1"/>
        <end position="101"/>
    </location>
</feature>
<sequence length="101" mass="11565">MAKQSMKAREVVRVKLAEKYRAKREELKAIISGVNSSDEDRWDAVLKLQTLPRDSSPSRQRKRCRQTGRPHGYVGKFGLSRIKLREAAMRGEVPGLKKASW</sequence>
<organism>
    <name type="scientific">Serratia proteamaculans (strain 568)</name>
    <dbReference type="NCBI Taxonomy" id="399741"/>
    <lineage>
        <taxon>Bacteria</taxon>
        <taxon>Pseudomonadati</taxon>
        <taxon>Pseudomonadota</taxon>
        <taxon>Gammaproteobacteria</taxon>
        <taxon>Enterobacterales</taxon>
        <taxon>Yersiniaceae</taxon>
        <taxon>Serratia</taxon>
    </lineage>
</organism>
<comment type="function">
    <text evidence="1">Binds 16S rRNA, required for the assembly of 30S particles and may also be responsible for determining the conformation of the 16S rRNA at the A site.</text>
</comment>
<comment type="subunit">
    <text evidence="1">Part of the 30S ribosomal subunit. Contacts proteins S3 and S10.</text>
</comment>
<comment type="similarity">
    <text evidence="1">Belongs to the universal ribosomal protein uS14 family.</text>
</comment>
<proteinExistence type="inferred from homology"/>
<gene>
    <name evidence="1" type="primary">rpsN</name>
    <name type="ordered locus">Spro_4531</name>
</gene>
<reference key="1">
    <citation type="submission" date="2007-09" db="EMBL/GenBank/DDBJ databases">
        <title>Complete sequence of chromosome of Serratia proteamaculans 568.</title>
        <authorList>
            <consortium name="US DOE Joint Genome Institute"/>
            <person name="Copeland A."/>
            <person name="Lucas S."/>
            <person name="Lapidus A."/>
            <person name="Barry K."/>
            <person name="Glavina del Rio T."/>
            <person name="Dalin E."/>
            <person name="Tice H."/>
            <person name="Pitluck S."/>
            <person name="Chain P."/>
            <person name="Malfatti S."/>
            <person name="Shin M."/>
            <person name="Vergez L."/>
            <person name="Schmutz J."/>
            <person name="Larimer F."/>
            <person name="Land M."/>
            <person name="Hauser L."/>
            <person name="Kyrpides N."/>
            <person name="Kim E."/>
            <person name="Taghavi S."/>
            <person name="Newman L."/>
            <person name="Vangronsveld J."/>
            <person name="van der Lelie D."/>
            <person name="Richardson P."/>
        </authorList>
    </citation>
    <scope>NUCLEOTIDE SEQUENCE [LARGE SCALE GENOMIC DNA]</scope>
    <source>
        <strain>568</strain>
    </source>
</reference>
<protein>
    <recommendedName>
        <fullName evidence="1">Small ribosomal subunit protein uS14</fullName>
    </recommendedName>
    <alternativeName>
        <fullName evidence="2">30S ribosomal protein S14</fullName>
    </alternativeName>
</protein>
<dbReference type="EMBL" id="CP000826">
    <property type="protein sequence ID" value="ABV43624.1"/>
    <property type="molecule type" value="Genomic_DNA"/>
</dbReference>
<dbReference type="SMR" id="A8GKI4"/>
<dbReference type="STRING" id="399741.Spro_4531"/>
<dbReference type="KEGG" id="spe:Spro_4531"/>
<dbReference type="eggNOG" id="COG0199">
    <property type="taxonomic scope" value="Bacteria"/>
</dbReference>
<dbReference type="HOGENOM" id="CLU_139869_0_1_6"/>
<dbReference type="OrthoDB" id="9810484at2"/>
<dbReference type="GO" id="GO:0005737">
    <property type="term" value="C:cytoplasm"/>
    <property type="evidence" value="ECO:0007669"/>
    <property type="project" value="UniProtKB-ARBA"/>
</dbReference>
<dbReference type="GO" id="GO:0015935">
    <property type="term" value="C:small ribosomal subunit"/>
    <property type="evidence" value="ECO:0007669"/>
    <property type="project" value="TreeGrafter"/>
</dbReference>
<dbReference type="GO" id="GO:0019843">
    <property type="term" value="F:rRNA binding"/>
    <property type="evidence" value="ECO:0007669"/>
    <property type="project" value="UniProtKB-UniRule"/>
</dbReference>
<dbReference type="GO" id="GO:0003735">
    <property type="term" value="F:structural constituent of ribosome"/>
    <property type="evidence" value="ECO:0007669"/>
    <property type="project" value="InterPro"/>
</dbReference>
<dbReference type="GO" id="GO:0006412">
    <property type="term" value="P:translation"/>
    <property type="evidence" value="ECO:0007669"/>
    <property type="project" value="UniProtKB-UniRule"/>
</dbReference>
<dbReference type="FunFam" id="1.10.287.1480:FF:000001">
    <property type="entry name" value="30S ribosomal protein S14"/>
    <property type="match status" value="1"/>
</dbReference>
<dbReference type="Gene3D" id="1.10.287.1480">
    <property type="match status" value="1"/>
</dbReference>
<dbReference type="HAMAP" id="MF_00537">
    <property type="entry name" value="Ribosomal_uS14_1"/>
    <property type="match status" value="1"/>
</dbReference>
<dbReference type="InterPro" id="IPR001209">
    <property type="entry name" value="Ribosomal_uS14"/>
</dbReference>
<dbReference type="InterPro" id="IPR023036">
    <property type="entry name" value="Ribosomal_uS14_bac/plastid"/>
</dbReference>
<dbReference type="InterPro" id="IPR018271">
    <property type="entry name" value="Ribosomal_uS14_CS"/>
</dbReference>
<dbReference type="NCBIfam" id="NF006477">
    <property type="entry name" value="PRK08881.1"/>
    <property type="match status" value="1"/>
</dbReference>
<dbReference type="PANTHER" id="PTHR19836">
    <property type="entry name" value="30S RIBOSOMAL PROTEIN S14"/>
    <property type="match status" value="1"/>
</dbReference>
<dbReference type="PANTHER" id="PTHR19836:SF19">
    <property type="entry name" value="SMALL RIBOSOMAL SUBUNIT PROTEIN US14M"/>
    <property type="match status" value="1"/>
</dbReference>
<dbReference type="Pfam" id="PF00253">
    <property type="entry name" value="Ribosomal_S14"/>
    <property type="match status" value="1"/>
</dbReference>
<dbReference type="SUPFAM" id="SSF57716">
    <property type="entry name" value="Glucocorticoid receptor-like (DNA-binding domain)"/>
    <property type="match status" value="1"/>
</dbReference>
<dbReference type="PROSITE" id="PS00527">
    <property type="entry name" value="RIBOSOMAL_S14"/>
    <property type="match status" value="1"/>
</dbReference>
<accession>A8GKI4</accession>